<protein>
    <recommendedName>
        <fullName evidence="1">Nuclear egress protein 2</fullName>
    </recommendedName>
</protein>
<feature type="chain" id="PRO_0000406182" description="Nuclear egress protein 2">
    <location>
        <begin position="1"/>
        <end position="276"/>
    </location>
</feature>
<feature type="topological domain" description="Perinuclear space" evidence="1">
    <location>
        <begin position="1"/>
        <end position="253"/>
    </location>
</feature>
<feature type="transmembrane region" description="Helical" evidence="1">
    <location>
        <begin position="254"/>
        <end position="274"/>
    </location>
</feature>
<feature type="topological domain" description="Nuclear" evidence="1">
    <location>
        <begin position="275"/>
        <end position="276"/>
    </location>
</feature>
<feature type="region of interest" description="Disordered" evidence="2">
    <location>
        <begin position="212"/>
        <end position="237"/>
    </location>
</feature>
<feature type="compositionally biased region" description="Low complexity" evidence="2">
    <location>
        <begin position="212"/>
        <end position="225"/>
    </location>
</feature>
<reference key="1">
    <citation type="journal article" date="1991" name="J. Gen. Virol.">
        <title>Comparative sequence analysis of the long repeat regions and adjoining parts of the long unique regions in the genomes of herpes simplex viruses types 1 and 2.</title>
        <authorList>
            <person name="McGeoch D.J."/>
            <person name="Cunningham C."/>
            <person name="McIntyre G."/>
            <person name="Dolan A."/>
        </authorList>
    </citation>
    <scope>NUCLEOTIDE SEQUENCE [LARGE SCALE GENOMIC DNA]</scope>
</reference>
<reference key="2">
    <citation type="journal article" date="2000" name="J. Gen. Virol.">
        <title>The UL34 gene product of herpes simplex virus type 2 is a tail-anchored type II membrane protein that is significant for virus envelopment.</title>
        <authorList>
            <person name="Shiba C."/>
            <person name="Daikoku T."/>
            <person name="Goshima F."/>
            <person name="Takakuwa H."/>
            <person name="Yamauchi Y."/>
            <person name="Koiwai O."/>
            <person name="Nishiyama Y."/>
        </authorList>
    </citation>
    <scope>FUNCTION</scope>
    <scope>TOPOLOGY</scope>
</reference>
<reference key="3">
    <citation type="journal article" date="2001" name="J. Gen. Virol.">
        <title>Herpes simplex virus type 2 UL34 protein requires UL31 protein for its relocation to the internal nuclear membrane in transfected cells.</title>
        <authorList>
            <person name="Yamauchi Y."/>
            <person name="Shiba C."/>
            <person name="Goshima F."/>
            <person name="Nawa A."/>
            <person name="Murata T."/>
            <person name="Nishiyama Y."/>
        </authorList>
    </citation>
    <scope>INTERACTION WITH UL31</scope>
</reference>
<keyword id="KW-1043">Host membrane</keyword>
<keyword id="KW-1048">Host nucleus</keyword>
<keyword id="KW-0426">Late protein</keyword>
<keyword id="KW-0472">Membrane</keyword>
<keyword id="KW-0597">Phosphoprotein</keyword>
<keyword id="KW-1185">Reference proteome</keyword>
<keyword id="KW-0812">Transmembrane</keyword>
<keyword id="KW-1133">Transmembrane helix</keyword>
<comment type="function">
    <text evidence="1 3">Plays an essential role in virion nuclear egress, the first step of virion release from infected cell. Within the host nucleus, NEC1 interacts with the newly formed capsid through the vertexes and directs it to the inner nuclear membrane by associating with NEC2. Induces the budding of the capsid at the inner nuclear membrane as well as its envelopment into the perinuclear space. There, the NEC1/NEC2 complex promotes the fusion of the enveloped capsid with the outer nuclear membrane and the subsequent release of the viral capsid into the cytoplasm where it will reach the secondary budding sites in the host Golgi or trans-Golgi network.</text>
</comment>
<comment type="subunit">
    <text evidence="1">Forms a heterohexameric complex with NEC1.</text>
</comment>
<comment type="subcellular location">
    <subcellularLocation>
        <location evidence="1">Host nucleus inner membrane</location>
        <topology evidence="1">Single-pass membrane protein</topology>
    </subcellularLocation>
    <text evidence="1">Also localizes at the transient membrane of perinuclear virions.</text>
</comment>
<comment type="PTM">
    <text evidence="1">Phosphorylated.</text>
</comment>
<comment type="similarity">
    <text evidence="1">Belongs to the herpesviridae NEC2 protein family.</text>
</comment>
<evidence type="ECO:0000255" key="1">
    <source>
        <dbReference type="HAMAP-Rule" id="MF_04024"/>
    </source>
</evidence>
<evidence type="ECO:0000256" key="2">
    <source>
        <dbReference type="SAM" id="MobiDB-lite"/>
    </source>
</evidence>
<evidence type="ECO:0000269" key="3">
    <source>
    </source>
</evidence>
<name>NEC2_HHV2H</name>
<organismHost>
    <name type="scientific">Homo sapiens</name>
    <name type="common">Human</name>
    <dbReference type="NCBI Taxonomy" id="9606"/>
</organismHost>
<gene>
    <name evidence="1" type="primary">NEC2</name>
    <name type="ordered locus">UL34</name>
</gene>
<sequence>MAGMGKPYGGRPGDAFEGLVQRIRLIVPATLRGGGGESGPYSPSNPPSRCAFQFHGQDGSDEAFPIEYVLRLMNDWADVPCNPYLRVQNTGVSVLFQGFFNRPHGAPGGAITAEQTNVILHSTETTGLSLGDLDDVKGRLGLDARPMMASMWISCFVRMPRVQLAFRFMGPEDAVRTRRILCRAAEQALARRRRSRRSQDDYGAVVVAAAHHSSGAPGPGVAASGPPAPPGRGPARPWHQAVQLFRAPRPGPPALLLLAAGLFLGAAIWWAVGARL</sequence>
<proteinExistence type="evidence at protein level"/>
<dbReference type="EMBL" id="Z86099">
    <property type="protein sequence ID" value="CAB06720.1"/>
    <property type="molecule type" value="Genomic_DNA"/>
</dbReference>
<dbReference type="RefSeq" id="YP_009137186.1">
    <property type="nucleotide sequence ID" value="NC_001798.2"/>
</dbReference>
<dbReference type="SMR" id="P89457"/>
<dbReference type="DNASU" id="1487320"/>
<dbReference type="GeneID" id="1487320"/>
<dbReference type="KEGG" id="vg:1487320"/>
<dbReference type="Proteomes" id="UP000001874">
    <property type="component" value="Segment"/>
</dbReference>
<dbReference type="GO" id="GO:0044201">
    <property type="term" value="C:host cell nuclear inner membrane"/>
    <property type="evidence" value="ECO:0007669"/>
    <property type="project" value="UniProtKB-SubCell"/>
</dbReference>
<dbReference type="GO" id="GO:0016020">
    <property type="term" value="C:membrane"/>
    <property type="evidence" value="ECO:0007669"/>
    <property type="project" value="UniProtKB-KW"/>
</dbReference>
<dbReference type="GO" id="GO:0046765">
    <property type="term" value="P:viral budding from nuclear membrane"/>
    <property type="evidence" value="ECO:0000314"/>
    <property type="project" value="UniProtKB"/>
</dbReference>
<dbReference type="HAMAP" id="MF_04024">
    <property type="entry name" value="HSV_NEC2"/>
    <property type="match status" value="1"/>
</dbReference>
<dbReference type="InterPro" id="IPR007626">
    <property type="entry name" value="Herpesvirus_viron_egress-type"/>
</dbReference>
<dbReference type="Pfam" id="PF04541">
    <property type="entry name" value="Herpes_U34"/>
    <property type="match status" value="1"/>
</dbReference>
<accession>P89457</accession>
<organism>
    <name type="scientific">Human herpesvirus 2 (strain HG52)</name>
    <name type="common">HHV-2</name>
    <name type="synonym">Human herpes simplex virus 2</name>
    <dbReference type="NCBI Taxonomy" id="10315"/>
    <lineage>
        <taxon>Viruses</taxon>
        <taxon>Duplodnaviria</taxon>
        <taxon>Heunggongvirae</taxon>
        <taxon>Peploviricota</taxon>
        <taxon>Herviviricetes</taxon>
        <taxon>Herpesvirales</taxon>
        <taxon>Orthoherpesviridae</taxon>
        <taxon>Alphaherpesvirinae</taxon>
        <taxon>Simplexvirus</taxon>
        <taxon>Simplexvirus humanalpha2</taxon>
        <taxon>Human herpesvirus 2</taxon>
    </lineage>
</organism>